<organism>
    <name type="scientific">Bungarus multicinctus</name>
    <name type="common">Many-banded krait</name>
    <dbReference type="NCBI Taxonomy" id="8616"/>
    <lineage>
        <taxon>Eukaryota</taxon>
        <taxon>Metazoa</taxon>
        <taxon>Chordata</taxon>
        <taxon>Craniata</taxon>
        <taxon>Vertebrata</taxon>
        <taxon>Euteleostomi</taxon>
        <taxon>Lepidosauria</taxon>
        <taxon>Squamata</taxon>
        <taxon>Bifurcata</taxon>
        <taxon>Unidentata</taxon>
        <taxon>Episquamata</taxon>
        <taxon>Toxicofera</taxon>
        <taxon>Serpentes</taxon>
        <taxon>Colubroidea</taxon>
        <taxon>Elapidae</taxon>
        <taxon>Bungarinae</taxon>
        <taxon>Bungarus</taxon>
    </lineage>
</organism>
<name>VKT1L_BUNMU</name>
<reference key="1">
    <citation type="journal article" date="2008" name="Toxicon">
        <title>Genomic DNAs encoding Bungarus multicinctis protease inhibitor-like proteins.</title>
        <authorList>
            <person name="Chang L.-S."/>
            <person name="Wang J.-J."/>
            <person name="Cheng Y.-C."/>
            <person name="Chou W.-M."/>
        </authorList>
    </citation>
    <scope>NUCLEOTIDE SEQUENCE [GENOMIC DNA]</scope>
    <scope>FUNCTION</scope>
    <source>
        <tissue>Liver</tissue>
    </source>
</reference>
<accession>B4ESA2</accession>
<dbReference type="EMBL" id="AM939781">
    <property type="protein sequence ID" value="CAP74381.1"/>
    <property type="molecule type" value="Genomic_DNA"/>
</dbReference>
<dbReference type="SMR" id="B4ESA2"/>
<dbReference type="GO" id="GO:0005615">
    <property type="term" value="C:extracellular space"/>
    <property type="evidence" value="ECO:0007669"/>
    <property type="project" value="TreeGrafter"/>
</dbReference>
<dbReference type="GO" id="GO:0004867">
    <property type="term" value="F:serine-type endopeptidase inhibitor activity"/>
    <property type="evidence" value="ECO:0007669"/>
    <property type="project" value="UniProtKB-KW"/>
</dbReference>
<dbReference type="CDD" id="cd22619">
    <property type="entry name" value="Kunitz_B2B"/>
    <property type="match status" value="1"/>
</dbReference>
<dbReference type="Gene3D" id="4.10.410.10">
    <property type="entry name" value="Pancreatic trypsin inhibitor Kunitz domain"/>
    <property type="match status" value="1"/>
</dbReference>
<dbReference type="InterPro" id="IPR002223">
    <property type="entry name" value="Kunitz_BPTI"/>
</dbReference>
<dbReference type="InterPro" id="IPR036880">
    <property type="entry name" value="Kunitz_BPTI_sf"/>
</dbReference>
<dbReference type="InterPro" id="IPR020901">
    <property type="entry name" value="Prtase_inh_Kunz-CS"/>
</dbReference>
<dbReference type="InterPro" id="IPR050098">
    <property type="entry name" value="TFPI/VKTCI-like"/>
</dbReference>
<dbReference type="PANTHER" id="PTHR10083">
    <property type="entry name" value="KUNITZ-TYPE PROTEASE INHIBITOR-RELATED"/>
    <property type="match status" value="1"/>
</dbReference>
<dbReference type="PANTHER" id="PTHR10083:SF328">
    <property type="entry name" value="TISSUE FACTOR PATHWAY INHIBITOR"/>
    <property type="match status" value="1"/>
</dbReference>
<dbReference type="Pfam" id="PF00014">
    <property type="entry name" value="Kunitz_BPTI"/>
    <property type="match status" value="1"/>
</dbReference>
<dbReference type="PRINTS" id="PR00759">
    <property type="entry name" value="BASICPTASE"/>
</dbReference>
<dbReference type="SMART" id="SM00131">
    <property type="entry name" value="KU"/>
    <property type="match status" value="1"/>
</dbReference>
<dbReference type="SUPFAM" id="SSF57362">
    <property type="entry name" value="BPTI-like"/>
    <property type="match status" value="1"/>
</dbReference>
<dbReference type="PROSITE" id="PS00280">
    <property type="entry name" value="BPTI_KUNITZ_1"/>
    <property type="match status" value="1"/>
</dbReference>
<dbReference type="PROSITE" id="PS50279">
    <property type="entry name" value="BPTI_KUNITZ_2"/>
    <property type="match status" value="1"/>
</dbReference>
<evidence type="ECO:0000250" key="1"/>
<evidence type="ECO:0000255" key="2">
    <source>
        <dbReference type="PROSITE-ProRule" id="PRU00031"/>
    </source>
</evidence>
<evidence type="ECO:0000269" key="3">
    <source>
    </source>
</evidence>
<evidence type="ECO:0000305" key="4"/>
<keyword id="KW-1015">Disulfide bond</keyword>
<keyword id="KW-0646">Protease inhibitor</keyword>
<keyword id="KW-0964">Secreted</keyword>
<keyword id="KW-0722">Serine protease inhibitor</keyword>
<keyword id="KW-0732">Signal</keyword>
<protein>
    <recommendedName>
        <fullName>Kunitz-type serine protease inhibitor PILP-1</fullName>
    </recommendedName>
    <alternativeName>
        <fullName>Protease inhibitor-like protein 1</fullName>
    </alternativeName>
</protein>
<sequence>MSSGSLLLLLGLLTLWAELTPISTKDRPSCDKAPDTERCKRNVYAFYYNPSARDCLQFVYGGCDGNGKHFRSKALCLFHCHR</sequence>
<proteinExistence type="inferred from homology"/>
<comment type="function">
    <text evidence="3">Serine protease inhibitor that inhibits trypsin (Ki=55.62 nM).</text>
</comment>
<comment type="subcellular location">
    <subcellularLocation>
        <location evidence="1">Secreted</location>
    </subcellularLocation>
</comment>
<comment type="tissue specificity">
    <text>Expressed by the venom gland.</text>
</comment>
<comment type="similarity">
    <text evidence="4">Belongs to the venom Kunitz-type family.</text>
</comment>
<feature type="signal peptide" evidence="1">
    <location>
        <begin position="1"/>
        <end position="24"/>
    </location>
</feature>
<feature type="chain" id="PRO_5000388067" description="Kunitz-type serine protease inhibitor PILP-1">
    <location>
        <begin position="25"/>
        <end position="82"/>
    </location>
</feature>
<feature type="domain" description="BPTI/Kunitz inhibitor" evidence="2">
    <location>
        <begin position="30"/>
        <end position="80"/>
    </location>
</feature>
<feature type="site" description="Reactive bond for trypsin" evidence="1">
    <location>
        <begin position="40"/>
        <end position="41"/>
    </location>
</feature>
<feature type="disulfide bond" evidence="2">
    <location>
        <begin position="30"/>
        <end position="80"/>
    </location>
</feature>
<feature type="disulfide bond" evidence="2">
    <location>
        <begin position="39"/>
        <end position="63"/>
    </location>
</feature>
<feature type="disulfide bond" evidence="2">
    <location>
        <begin position="55"/>
        <end position="76"/>
    </location>
</feature>